<keyword id="KW-0560">Oxidoreductase</keyword>
<keyword id="KW-1185">Reference proteome</keyword>
<keyword id="KW-0819">tRNA processing</keyword>
<sequence length="300" mass="33239">MPEPHPAPQPYTVAALYQFRALPDPAALRAELLALGERLELCGTLIVADEGINGTVAGSAAAIAELHAFLLASGFDRLEYKESQASEKPFKRYKVRLKKEIVTLGVPVAPREQVGTYLDPQAWNDLLADPEVIVVDTRNRYEVKAGTFQGAVDPEIDSFREFPAWVDEHLAGAEGKKIAMFCTGGIRCEKSTSLLLQKGFQDVYHLKGGILKYLEDVPQAQSRWDGECFVFDGRVTVGHGLQEGDAVMCHSCGWPLTAQERAHPQFEEGVSCEHCFDETTDVQKAAFRERQRMYEAGHLT</sequence>
<organism>
    <name type="scientific">Deinococcus radiodurans (strain ATCC 13939 / DSM 20539 / JCM 16871 / CCUG 27074 / LMG 4051 / NBRC 15346 / NCIMB 9279 / VKM B-1422 / R1)</name>
    <dbReference type="NCBI Taxonomy" id="243230"/>
    <lineage>
        <taxon>Bacteria</taxon>
        <taxon>Thermotogati</taxon>
        <taxon>Deinococcota</taxon>
        <taxon>Deinococci</taxon>
        <taxon>Deinococcales</taxon>
        <taxon>Deinococcaceae</taxon>
        <taxon>Deinococcus</taxon>
    </lineage>
</organism>
<feature type="chain" id="PRO_0000161469" description="tRNA uridine(34) hydroxylase">
    <location>
        <begin position="1"/>
        <end position="300"/>
    </location>
</feature>
<feature type="domain" description="Rhodanese" evidence="1">
    <location>
        <begin position="128"/>
        <end position="222"/>
    </location>
</feature>
<feature type="active site" description="Cysteine persulfide intermediate" evidence="1">
    <location>
        <position position="182"/>
    </location>
</feature>
<proteinExistence type="inferred from homology"/>
<reference key="1">
    <citation type="journal article" date="1999" name="Science">
        <title>Genome sequence of the radioresistant bacterium Deinococcus radiodurans R1.</title>
        <authorList>
            <person name="White O."/>
            <person name="Eisen J.A."/>
            <person name="Heidelberg J.F."/>
            <person name="Hickey E.K."/>
            <person name="Peterson J.D."/>
            <person name="Dodson R.J."/>
            <person name="Haft D.H."/>
            <person name="Gwinn M.L."/>
            <person name="Nelson W.C."/>
            <person name="Richardson D.L."/>
            <person name="Moffat K.S."/>
            <person name="Qin H."/>
            <person name="Jiang L."/>
            <person name="Pamphile W."/>
            <person name="Crosby M."/>
            <person name="Shen M."/>
            <person name="Vamathevan J.J."/>
            <person name="Lam P."/>
            <person name="McDonald L.A."/>
            <person name="Utterback T.R."/>
            <person name="Zalewski C."/>
            <person name="Makarova K.S."/>
            <person name="Aravind L."/>
            <person name="Daly M.J."/>
            <person name="Minton K.W."/>
            <person name="Fleischmann R.D."/>
            <person name="Ketchum K.A."/>
            <person name="Nelson K.E."/>
            <person name="Salzberg S.L."/>
            <person name="Smith H.O."/>
            <person name="Venter J.C."/>
            <person name="Fraser C.M."/>
        </authorList>
    </citation>
    <scope>NUCLEOTIDE SEQUENCE [LARGE SCALE GENOMIC DNA]</scope>
    <source>
        <strain>ATCC 13939 / DSM 20539 / JCM 16871 / CCUG 27074 / LMG 4051 / NBRC 15346 / NCIMB 9279 / VKM B-1422 / R1</strain>
    </source>
</reference>
<accession>Q9RVC9</accession>
<gene>
    <name evidence="1" type="primary">trhO</name>
    <name type="ordered locus">DR_1100</name>
</gene>
<evidence type="ECO:0000255" key="1">
    <source>
        <dbReference type="HAMAP-Rule" id="MF_00469"/>
    </source>
</evidence>
<name>TRHO_DEIRA</name>
<protein>
    <recommendedName>
        <fullName evidence="1">tRNA uridine(34) hydroxylase</fullName>
        <ecNumber evidence="1">1.14.-.-</ecNumber>
    </recommendedName>
    <alternativeName>
        <fullName evidence="1">tRNA hydroxylation protein O</fullName>
    </alternativeName>
</protein>
<comment type="function">
    <text evidence="1">Catalyzes oxygen-dependent 5-hydroxyuridine (ho5U) modification at position 34 in tRNAs.</text>
</comment>
<comment type="catalytic activity">
    <reaction evidence="1">
        <text>uridine(34) in tRNA + AH2 + O2 = 5-hydroxyuridine(34) in tRNA + A + H2O</text>
        <dbReference type="Rhea" id="RHEA:64224"/>
        <dbReference type="Rhea" id="RHEA-COMP:11727"/>
        <dbReference type="Rhea" id="RHEA-COMP:13381"/>
        <dbReference type="ChEBI" id="CHEBI:13193"/>
        <dbReference type="ChEBI" id="CHEBI:15377"/>
        <dbReference type="ChEBI" id="CHEBI:15379"/>
        <dbReference type="ChEBI" id="CHEBI:17499"/>
        <dbReference type="ChEBI" id="CHEBI:65315"/>
        <dbReference type="ChEBI" id="CHEBI:136877"/>
    </reaction>
</comment>
<comment type="similarity">
    <text evidence="1">Belongs to the TrhO family.</text>
</comment>
<dbReference type="EC" id="1.14.-.-" evidence="1"/>
<dbReference type="EMBL" id="AE000513">
    <property type="protein sequence ID" value="AAF10674.1"/>
    <property type="molecule type" value="Genomic_DNA"/>
</dbReference>
<dbReference type="PIR" id="G75436">
    <property type="entry name" value="G75436"/>
</dbReference>
<dbReference type="RefSeq" id="NP_294824.1">
    <property type="nucleotide sequence ID" value="NC_001263.1"/>
</dbReference>
<dbReference type="RefSeq" id="WP_010887743.1">
    <property type="nucleotide sequence ID" value="NC_001263.1"/>
</dbReference>
<dbReference type="SMR" id="Q9RVC9"/>
<dbReference type="FunCoup" id="Q9RVC9">
    <property type="interactions" value="275"/>
</dbReference>
<dbReference type="STRING" id="243230.DR_1100"/>
<dbReference type="PaxDb" id="243230-DR_1100"/>
<dbReference type="EnsemblBacteria" id="AAF10674">
    <property type="protein sequence ID" value="AAF10674"/>
    <property type="gene ID" value="DR_1100"/>
</dbReference>
<dbReference type="GeneID" id="69517346"/>
<dbReference type="KEGG" id="dra:DR_1100"/>
<dbReference type="PATRIC" id="fig|243230.17.peg.1296"/>
<dbReference type="eggNOG" id="COG1054">
    <property type="taxonomic scope" value="Bacteria"/>
</dbReference>
<dbReference type="HOGENOM" id="CLU_038878_0_0_0"/>
<dbReference type="InParanoid" id="Q9RVC9"/>
<dbReference type="OrthoDB" id="9778326at2"/>
<dbReference type="Proteomes" id="UP000002524">
    <property type="component" value="Chromosome 1"/>
</dbReference>
<dbReference type="GO" id="GO:0016705">
    <property type="term" value="F:oxidoreductase activity, acting on paired donors, with incorporation or reduction of molecular oxygen"/>
    <property type="evidence" value="ECO:0007669"/>
    <property type="project" value="UniProtKB-UniRule"/>
</dbReference>
<dbReference type="GO" id="GO:0006400">
    <property type="term" value="P:tRNA modification"/>
    <property type="evidence" value="ECO:0007669"/>
    <property type="project" value="UniProtKB-UniRule"/>
</dbReference>
<dbReference type="CDD" id="cd01518">
    <property type="entry name" value="RHOD_YceA"/>
    <property type="match status" value="1"/>
</dbReference>
<dbReference type="Gene3D" id="3.30.70.100">
    <property type="match status" value="1"/>
</dbReference>
<dbReference type="Gene3D" id="3.40.250.10">
    <property type="entry name" value="Rhodanese-like domain"/>
    <property type="match status" value="1"/>
</dbReference>
<dbReference type="HAMAP" id="MF_00469">
    <property type="entry name" value="TrhO"/>
    <property type="match status" value="1"/>
</dbReference>
<dbReference type="InterPro" id="IPR001763">
    <property type="entry name" value="Rhodanese-like_dom"/>
</dbReference>
<dbReference type="InterPro" id="IPR036873">
    <property type="entry name" value="Rhodanese-like_dom_sf"/>
</dbReference>
<dbReference type="InterPro" id="IPR020936">
    <property type="entry name" value="TrhO"/>
</dbReference>
<dbReference type="InterPro" id="IPR040503">
    <property type="entry name" value="TRHO_N"/>
</dbReference>
<dbReference type="NCBIfam" id="NF001136">
    <property type="entry name" value="PRK00142.1-4"/>
    <property type="match status" value="1"/>
</dbReference>
<dbReference type="PANTHER" id="PTHR43268:SF3">
    <property type="entry name" value="RHODANESE-LIKE DOMAIN-CONTAINING PROTEIN 7-RELATED"/>
    <property type="match status" value="1"/>
</dbReference>
<dbReference type="PANTHER" id="PTHR43268">
    <property type="entry name" value="THIOSULFATE SULFURTRANSFERASE/RHODANESE-LIKE DOMAIN-CONTAINING PROTEIN 2"/>
    <property type="match status" value="1"/>
</dbReference>
<dbReference type="Pfam" id="PF00581">
    <property type="entry name" value="Rhodanese"/>
    <property type="match status" value="1"/>
</dbReference>
<dbReference type="Pfam" id="PF17773">
    <property type="entry name" value="UPF0176_N"/>
    <property type="match status" value="1"/>
</dbReference>
<dbReference type="SMART" id="SM00450">
    <property type="entry name" value="RHOD"/>
    <property type="match status" value="1"/>
</dbReference>
<dbReference type="SUPFAM" id="SSF52821">
    <property type="entry name" value="Rhodanese/Cell cycle control phosphatase"/>
    <property type="match status" value="1"/>
</dbReference>
<dbReference type="PROSITE" id="PS50206">
    <property type="entry name" value="RHODANESE_3"/>
    <property type="match status" value="1"/>
</dbReference>